<proteinExistence type="inferred from homology"/>
<accession>D3ZQE1</accession>
<comment type="function">
    <text evidence="1 2">Required for proper hearing, plays a role in maintaining the integrity of the tectorial membrane.</text>
</comment>
<comment type="subunit">
    <text evidence="1 2">Homooligomer; can for homodimers and homotetramers. Interacts with TECTA and TECTB.</text>
</comment>
<comment type="subcellular location">
    <subcellularLocation>
        <location evidence="1">Secreted</location>
    </subcellularLocation>
    <text evidence="1">Localizes at the tip of cochlear outer hair cells and to the tectorial membrane.</text>
</comment>
<comment type="similarity">
    <text evidence="6">Belongs to the immunoglobulin superfamily. CEA family.</text>
</comment>
<protein>
    <recommendedName>
        <fullName evidence="6">Cell adhesion molecule CEACAM16</fullName>
    </recommendedName>
    <alternativeName>
        <fullName>Carcinoembryonic antigen-related cell adhesion molecule 16</fullName>
        <shortName evidence="7">CEA cell adhesion molecule 16</shortName>
    </alternativeName>
</protein>
<gene>
    <name evidence="7" type="primary">Ceacam16</name>
</gene>
<evidence type="ECO:0000250" key="1">
    <source>
        <dbReference type="UniProtKB" id="E9QA28"/>
    </source>
</evidence>
<evidence type="ECO:0000250" key="2">
    <source>
        <dbReference type="UniProtKB" id="Q2WEN9"/>
    </source>
</evidence>
<evidence type="ECO:0000255" key="3"/>
<evidence type="ECO:0000255" key="4">
    <source>
        <dbReference type="PROSITE-ProRule" id="PRU00114"/>
    </source>
</evidence>
<evidence type="ECO:0000256" key="5">
    <source>
        <dbReference type="SAM" id="MobiDB-lite"/>
    </source>
</evidence>
<evidence type="ECO:0000305" key="6"/>
<evidence type="ECO:0000312" key="7">
    <source>
        <dbReference type="RGD" id="1306386"/>
    </source>
</evidence>
<feature type="signal peptide" evidence="3">
    <location>
        <begin position="1"/>
        <end position="22"/>
    </location>
</feature>
<feature type="chain" id="PRO_0000417875" description="Cell adhesion molecule CEACAM16">
    <location>
        <begin position="23"/>
        <end position="423"/>
    </location>
</feature>
<feature type="domain" description="Ig-like C2-type 1">
    <location>
        <begin position="134"/>
        <end position="219"/>
    </location>
</feature>
<feature type="domain" description="Ig-like C2-type 2">
    <location>
        <begin position="224"/>
        <end position="310"/>
    </location>
</feature>
<feature type="region of interest" description="Disordered" evidence="5">
    <location>
        <begin position="77"/>
        <end position="96"/>
    </location>
</feature>
<feature type="compositionally biased region" description="Basic and acidic residues" evidence="5">
    <location>
        <begin position="84"/>
        <end position="95"/>
    </location>
</feature>
<feature type="glycosylation site" description="N-linked (GlcNAc...) asparagine" evidence="3">
    <location>
        <position position="38"/>
    </location>
</feature>
<feature type="glycosylation site" description="N-linked (GlcNAc...) asparagine" evidence="3">
    <location>
        <position position="217"/>
    </location>
</feature>
<feature type="disulfide bond" evidence="4">
    <location>
        <begin position="155"/>
        <end position="202"/>
    </location>
</feature>
<feature type="disulfide bond" evidence="4">
    <location>
        <begin position="253"/>
        <end position="294"/>
    </location>
</feature>
<name>CEA16_RAT</name>
<keyword id="KW-1015">Disulfide bond</keyword>
<keyword id="KW-0325">Glycoprotein</keyword>
<keyword id="KW-0393">Immunoglobulin domain</keyword>
<keyword id="KW-1185">Reference proteome</keyword>
<keyword id="KW-0677">Repeat</keyword>
<keyword id="KW-0964">Secreted</keyword>
<keyword id="KW-0732">Signal</keyword>
<organism>
    <name type="scientific">Rattus norvegicus</name>
    <name type="common">Rat</name>
    <dbReference type="NCBI Taxonomy" id="10116"/>
    <lineage>
        <taxon>Eukaryota</taxon>
        <taxon>Metazoa</taxon>
        <taxon>Chordata</taxon>
        <taxon>Craniata</taxon>
        <taxon>Vertebrata</taxon>
        <taxon>Euteleostomi</taxon>
        <taxon>Mammalia</taxon>
        <taxon>Eutheria</taxon>
        <taxon>Euarchontoglires</taxon>
        <taxon>Glires</taxon>
        <taxon>Rodentia</taxon>
        <taxon>Myomorpha</taxon>
        <taxon>Muroidea</taxon>
        <taxon>Muridae</taxon>
        <taxon>Murinae</taxon>
        <taxon>Rattus</taxon>
    </lineage>
</organism>
<dbReference type="EMBL" id="AABR03001739">
    <property type="status" value="NOT_ANNOTATED_CDS"/>
    <property type="molecule type" value="Genomic_DNA"/>
</dbReference>
<dbReference type="SMR" id="D3ZQE1"/>
<dbReference type="FunCoup" id="D3ZQE1">
    <property type="interactions" value="3"/>
</dbReference>
<dbReference type="STRING" id="10116.ENSRNOP00000041331"/>
<dbReference type="GlyCosmos" id="D3ZQE1">
    <property type="glycosylation" value="2 sites, No reported glycans"/>
</dbReference>
<dbReference type="GlyGen" id="D3ZQE1">
    <property type="glycosylation" value="2 sites"/>
</dbReference>
<dbReference type="PhosphoSitePlus" id="D3ZQE1"/>
<dbReference type="PaxDb" id="10116-ENSRNOP00000041331"/>
<dbReference type="UCSC" id="RGD:1306386">
    <property type="organism name" value="rat"/>
</dbReference>
<dbReference type="AGR" id="RGD:1306386"/>
<dbReference type="RGD" id="1306386">
    <property type="gene designation" value="Ceacam16"/>
</dbReference>
<dbReference type="eggNOG" id="ENOG502S42Z">
    <property type="taxonomic scope" value="Eukaryota"/>
</dbReference>
<dbReference type="InParanoid" id="D3ZQE1"/>
<dbReference type="PhylomeDB" id="D3ZQE1"/>
<dbReference type="TreeFam" id="TF336859"/>
<dbReference type="PRO" id="PR:D3ZQE1"/>
<dbReference type="Proteomes" id="UP000002494">
    <property type="component" value="Unplaced"/>
</dbReference>
<dbReference type="GO" id="GO:0005615">
    <property type="term" value="C:extracellular space"/>
    <property type="evidence" value="ECO:0000250"/>
    <property type="project" value="UniProtKB"/>
</dbReference>
<dbReference type="GO" id="GO:0032426">
    <property type="term" value="C:stereocilium tip"/>
    <property type="evidence" value="ECO:0000250"/>
    <property type="project" value="UniProtKB"/>
</dbReference>
<dbReference type="GO" id="GO:0042802">
    <property type="term" value="F:identical protein binding"/>
    <property type="evidence" value="ECO:0000250"/>
    <property type="project" value="UniProtKB"/>
</dbReference>
<dbReference type="GO" id="GO:0007605">
    <property type="term" value="P:sensory perception of sound"/>
    <property type="evidence" value="ECO:0000250"/>
    <property type="project" value="UniProtKB"/>
</dbReference>
<dbReference type="CDD" id="cd05740">
    <property type="entry name" value="IgI_hCEACAM_2_4_6_like"/>
    <property type="match status" value="1"/>
</dbReference>
<dbReference type="CDD" id="cd05774">
    <property type="entry name" value="IgV_CEACAM_D1"/>
    <property type="match status" value="2"/>
</dbReference>
<dbReference type="FunFam" id="2.60.40.10:FF:000947">
    <property type="entry name" value="Carcinoembryonic antigen related cell adhesion molecule 16"/>
    <property type="match status" value="1"/>
</dbReference>
<dbReference type="FunFam" id="2.60.40.10:FF:001283">
    <property type="entry name" value="Carcinoembryonic antigen related cell adhesion molecule 16"/>
    <property type="match status" value="1"/>
</dbReference>
<dbReference type="FunFam" id="2.60.40.10:FF:000244">
    <property type="entry name" value="carcinoembryonic antigen-related cell adhesion molecule 16"/>
    <property type="match status" value="1"/>
</dbReference>
<dbReference type="FunFam" id="2.60.40.10:FF:001282">
    <property type="entry name" value="carcinoembryonic antigen-related cell adhesion molecule 16"/>
    <property type="match status" value="1"/>
</dbReference>
<dbReference type="Gene3D" id="2.60.40.10">
    <property type="entry name" value="Immunoglobulins"/>
    <property type="match status" value="4"/>
</dbReference>
<dbReference type="InterPro" id="IPR050831">
    <property type="entry name" value="CEA_cell_adhesion"/>
</dbReference>
<dbReference type="InterPro" id="IPR007110">
    <property type="entry name" value="Ig-like_dom"/>
</dbReference>
<dbReference type="InterPro" id="IPR036179">
    <property type="entry name" value="Ig-like_dom_sf"/>
</dbReference>
<dbReference type="InterPro" id="IPR013783">
    <property type="entry name" value="Ig-like_fold"/>
</dbReference>
<dbReference type="InterPro" id="IPR003599">
    <property type="entry name" value="Ig_sub"/>
</dbReference>
<dbReference type="InterPro" id="IPR003598">
    <property type="entry name" value="Ig_sub2"/>
</dbReference>
<dbReference type="InterPro" id="IPR013106">
    <property type="entry name" value="Ig_V-set"/>
</dbReference>
<dbReference type="PANTHER" id="PTHR44427:SF1">
    <property type="entry name" value="CARCINOEMBRYONIC ANTIGEN-RELATED CELL ADHESION MOLECULE 1"/>
    <property type="match status" value="1"/>
</dbReference>
<dbReference type="PANTHER" id="PTHR44427">
    <property type="entry name" value="CARCINOEMBRYONIC ANTIGEN-RELATED CELL ADHESION MOLECULE 19"/>
    <property type="match status" value="1"/>
</dbReference>
<dbReference type="Pfam" id="PF13895">
    <property type="entry name" value="Ig_2"/>
    <property type="match status" value="1"/>
</dbReference>
<dbReference type="Pfam" id="PF13927">
    <property type="entry name" value="Ig_3"/>
    <property type="match status" value="1"/>
</dbReference>
<dbReference type="Pfam" id="PF07686">
    <property type="entry name" value="V-set"/>
    <property type="match status" value="1"/>
</dbReference>
<dbReference type="SMART" id="SM00409">
    <property type="entry name" value="IG"/>
    <property type="match status" value="4"/>
</dbReference>
<dbReference type="SMART" id="SM00408">
    <property type="entry name" value="IGc2"/>
    <property type="match status" value="2"/>
</dbReference>
<dbReference type="SUPFAM" id="SSF48726">
    <property type="entry name" value="Immunoglobulin"/>
    <property type="match status" value="4"/>
</dbReference>
<dbReference type="PROSITE" id="PS50835">
    <property type="entry name" value="IG_LIKE"/>
    <property type="match status" value="2"/>
</dbReference>
<reference key="1">
    <citation type="journal article" date="2004" name="Nature">
        <title>Genome sequence of the Brown Norway rat yields insights into mammalian evolution.</title>
        <authorList>
            <person name="Gibbs R.A."/>
            <person name="Weinstock G.M."/>
            <person name="Metzker M.L."/>
            <person name="Muzny D.M."/>
            <person name="Sodergren E.J."/>
            <person name="Scherer S."/>
            <person name="Scott G."/>
            <person name="Steffen D."/>
            <person name="Worley K.C."/>
            <person name="Burch P.E."/>
            <person name="Okwuonu G."/>
            <person name="Hines S."/>
            <person name="Lewis L."/>
            <person name="Deramo C."/>
            <person name="Delgado O."/>
            <person name="Dugan-Rocha S."/>
            <person name="Miner G."/>
            <person name="Morgan M."/>
            <person name="Hawes A."/>
            <person name="Gill R."/>
            <person name="Holt R.A."/>
            <person name="Adams M.D."/>
            <person name="Amanatides P.G."/>
            <person name="Baden-Tillson H."/>
            <person name="Barnstead M."/>
            <person name="Chin S."/>
            <person name="Evans C.A."/>
            <person name="Ferriera S."/>
            <person name="Fosler C."/>
            <person name="Glodek A."/>
            <person name="Gu Z."/>
            <person name="Jennings D."/>
            <person name="Kraft C.L."/>
            <person name="Nguyen T."/>
            <person name="Pfannkoch C.M."/>
            <person name="Sitter C."/>
            <person name="Sutton G.G."/>
            <person name="Venter J.C."/>
            <person name="Woodage T."/>
            <person name="Smith D."/>
            <person name="Lee H.-M."/>
            <person name="Gustafson E."/>
            <person name="Cahill P."/>
            <person name="Kana A."/>
            <person name="Doucette-Stamm L."/>
            <person name="Weinstock K."/>
            <person name="Fechtel K."/>
            <person name="Weiss R.B."/>
            <person name="Dunn D.M."/>
            <person name="Green E.D."/>
            <person name="Blakesley R.W."/>
            <person name="Bouffard G.G."/>
            <person name="De Jong P.J."/>
            <person name="Osoegawa K."/>
            <person name="Zhu B."/>
            <person name="Marra M."/>
            <person name="Schein J."/>
            <person name="Bosdet I."/>
            <person name="Fjell C."/>
            <person name="Jones S."/>
            <person name="Krzywinski M."/>
            <person name="Mathewson C."/>
            <person name="Siddiqui A."/>
            <person name="Wye N."/>
            <person name="McPherson J."/>
            <person name="Zhao S."/>
            <person name="Fraser C.M."/>
            <person name="Shetty J."/>
            <person name="Shatsman S."/>
            <person name="Geer K."/>
            <person name="Chen Y."/>
            <person name="Abramzon S."/>
            <person name="Nierman W.C."/>
            <person name="Havlak P.H."/>
            <person name="Chen R."/>
            <person name="Durbin K.J."/>
            <person name="Egan A."/>
            <person name="Ren Y."/>
            <person name="Song X.-Z."/>
            <person name="Li B."/>
            <person name="Liu Y."/>
            <person name="Qin X."/>
            <person name="Cawley S."/>
            <person name="Cooney A.J."/>
            <person name="D'Souza L.M."/>
            <person name="Martin K."/>
            <person name="Wu J.Q."/>
            <person name="Gonzalez-Garay M.L."/>
            <person name="Jackson A.R."/>
            <person name="Kalafus K.J."/>
            <person name="McLeod M.P."/>
            <person name="Milosavljevic A."/>
            <person name="Virk D."/>
            <person name="Volkov A."/>
            <person name="Wheeler D.A."/>
            <person name="Zhang Z."/>
            <person name="Bailey J.A."/>
            <person name="Eichler E.E."/>
            <person name="Tuzun E."/>
            <person name="Birney E."/>
            <person name="Mongin E."/>
            <person name="Ureta-Vidal A."/>
            <person name="Woodwark C."/>
            <person name="Zdobnov E."/>
            <person name="Bork P."/>
            <person name="Suyama M."/>
            <person name="Torrents D."/>
            <person name="Alexandersson M."/>
            <person name="Trask B.J."/>
            <person name="Young J.M."/>
            <person name="Huang H."/>
            <person name="Wang H."/>
            <person name="Xing H."/>
            <person name="Daniels S."/>
            <person name="Gietzen D."/>
            <person name="Schmidt J."/>
            <person name="Stevens K."/>
            <person name="Vitt U."/>
            <person name="Wingrove J."/>
            <person name="Camara F."/>
            <person name="Mar Alba M."/>
            <person name="Abril J.F."/>
            <person name="Guigo R."/>
            <person name="Smit A."/>
            <person name="Dubchak I."/>
            <person name="Rubin E.M."/>
            <person name="Couronne O."/>
            <person name="Poliakov A."/>
            <person name="Huebner N."/>
            <person name="Ganten D."/>
            <person name="Goesele C."/>
            <person name="Hummel O."/>
            <person name="Kreitler T."/>
            <person name="Lee Y.-A."/>
            <person name="Monti J."/>
            <person name="Schulz H."/>
            <person name="Zimdahl H."/>
            <person name="Himmelbauer H."/>
            <person name="Lehrach H."/>
            <person name="Jacob H.J."/>
            <person name="Bromberg S."/>
            <person name="Gullings-Handley J."/>
            <person name="Jensen-Seaman M.I."/>
            <person name="Kwitek A.E."/>
            <person name="Lazar J."/>
            <person name="Pasko D."/>
            <person name="Tonellato P.J."/>
            <person name="Twigger S."/>
            <person name="Ponting C.P."/>
            <person name="Duarte J.M."/>
            <person name="Rice S."/>
            <person name="Goodstadt L."/>
            <person name="Beatson S.A."/>
            <person name="Emes R.D."/>
            <person name="Winter E.E."/>
            <person name="Webber C."/>
            <person name="Brandt P."/>
            <person name="Nyakatura G."/>
            <person name="Adetobi M."/>
            <person name="Chiaromonte F."/>
            <person name="Elnitski L."/>
            <person name="Eswara P."/>
            <person name="Hardison R.C."/>
            <person name="Hou M."/>
            <person name="Kolbe D."/>
            <person name="Makova K."/>
            <person name="Miller W."/>
            <person name="Nekrutenko A."/>
            <person name="Riemer C."/>
            <person name="Schwartz S."/>
            <person name="Taylor J."/>
            <person name="Yang S."/>
            <person name="Zhang Y."/>
            <person name="Lindpaintner K."/>
            <person name="Andrews T.D."/>
            <person name="Caccamo M."/>
            <person name="Clamp M."/>
            <person name="Clarke L."/>
            <person name="Curwen V."/>
            <person name="Durbin R.M."/>
            <person name="Eyras E."/>
            <person name="Searle S.M."/>
            <person name="Cooper G.M."/>
            <person name="Batzoglou S."/>
            <person name="Brudno M."/>
            <person name="Sidow A."/>
            <person name="Stone E.A."/>
            <person name="Payseur B.A."/>
            <person name="Bourque G."/>
            <person name="Lopez-Otin C."/>
            <person name="Puente X.S."/>
            <person name="Chakrabarti K."/>
            <person name="Chatterji S."/>
            <person name="Dewey C."/>
            <person name="Pachter L."/>
            <person name="Bray N."/>
            <person name="Yap V.B."/>
            <person name="Caspi A."/>
            <person name="Tesler G."/>
            <person name="Pevzner P.A."/>
            <person name="Haussler D."/>
            <person name="Roskin K.M."/>
            <person name="Baertsch R."/>
            <person name="Clawson H."/>
            <person name="Furey T.S."/>
            <person name="Hinrichs A.S."/>
            <person name="Karolchik D."/>
            <person name="Kent W.J."/>
            <person name="Rosenbloom K.R."/>
            <person name="Trumbower H."/>
            <person name="Weirauch M."/>
            <person name="Cooper D.N."/>
            <person name="Stenson P.D."/>
            <person name="Ma B."/>
            <person name="Brent M."/>
            <person name="Arumugam M."/>
            <person name="Shteynberg D."/>
            <person name="Copley R.R."/>
            <person name="Taylor M.S."/>
            <person name="Riethman H."/>
            <person name="Mudunuri U."/>
            <person name="Peterson J."/>
            <person name="Guyer M."/>
            <person name="Felsenfeld A."/>
            <person name="Old S."/>
            <person name="Mockrin S."/>
            <person name="Collins F.S."/>
        </authorList>
    </citation>
    <scope>NUCLEOTIDE SEQUENCE [LARGE SCALE GENOMIC DNA]</scope>
    <source>
        <strain>Brown Norway</strain>
    </source>
</reference>
<sequence>MKMPLTWGSWFLLSAWILNAGAEISITPEPAQPAEGDNVTLVVHGLSGELLAYNWYAGPSISLTFLVASYIVSTGDETPGPAHTGREAVRPDGSLDIHGALPGHTGTYILQTLNRQFQTEVGYGHMQVYEILAPPTVMANDTALVERRDTLRLICSSPSPAEVRWFFNGDALPVAVRLGLSPDGRMLTRHGVRREEAGAYQCEVWNPVSVSRSEPLNLTVYFGPERVAILQDSTTRTGCTIKVDFNTSLTLWCVSRSCPEPEYVWAFNGKALKNGQDHLNISSMSADHEGTYTCIAKNSKTLLSGSASVVVKLSAAAVAMMIVPVPTKPMEGQDVTLTVQGYPKDLLVYAWYRGPASEPNRLLSQLPSGNWIAGPAHTGREVGFANCSLLVQKLNLTDAGRYTLKTVTLQGKTDTLEVELQVA</sequence>